<dbReference type="EMBL" id="CP000113">
    <property type="protein sequence ID" value="ABF89880.1"/>
    <property type="molecule type" value="Genomic_DNA"/>
</dbReference>
<dbReference type="RefSeq" id="WP_011555054.1">
    <property type="nucleotide sequence ID" value="NC_008095.1"/>
</dbReference>
<dbReference type="SMR" id="Q1D289"/>
<dbReference type="STRING" id="246197.MXAN_5080"/>
<dbReference type="EnsemblBacteria" id="ABF89880">
    <property type="protein sequence ID" value="ABF89880"/>
    <property type="gene ID" value="MXAN_5080"/>
</dbReference>
<dbReference type="GeneID" id="41362364"/>
<dbReference type="KEGG" id="mxa:MXAN_5080"/>
<dbReference type="eggNOG" id="COG0359">
    <property type="taxonomic scope" value="Bacteria"/>
</dbReference>
<dbReference type="HOGENOM" id="CLU_078938_3_0_7"/>
<dbReference type="OrthoDB" id="9788336at2"/>
<dbReference type="Proteomes" id="UP000002402">
    <property type="component" value="Chromosome"/>
</dbReference>
<dbReference type="GO" id="GO:1990904">
    <property type="term" value="C:ribonucleoprotein complex"/>
    <property type="evidence" value="ECO:0007669"/>
    <property type="project" value="UniProtKB-KW"/>
</dbReference>
<dbReference type="GO" id="GO:0005840">
    <property type="term" value="C:ribosome"/>
    <property type="evidence" value="ECO:0007669"/>
    <property type="project" value="UniProtKB-KW"/>
</dbReference>
<dbReference type="GO" id="GO:0019843">
    <property type="term" value="F:rRNA binding"/>
    <property type="evidence" value="ECO:0007669"/>
    <property type="project" value="UniProtKB-UniRule"/>
</dbReference>
<dbReference type="GO" id="GO:0003735">
    <property type="term" value="F:structural constituent of ribosome"/>
    <property type="evidence" value="ECO:0007669"/>
    <property type="project" value="InterPro"/>
</dbReference>
<dbReference type="GO" id="GO:0006412">
    <property type="term" value="P:translation"/>
    <property type="evidence" value="ECO:0007669"/>
    <property type="project" value="UniProtKB-UniRule"/>
</dbReference>
<dbReference type="Gene3D" id="3.10.430.100">
    <property type="entry name" value="Ribosomal protein L9, C-terminal domain"/>
    <property type="match status" value="1"/>
</dbReference>
<dbReference type="Gene3D" id="3.40.5.10">
    <property type="entry name" value="Ribosomal protein L9, N-terminal domain"/>
    <property type="match status" value="1"/>
</dbReference>
<dbReference type="HAMAP" id="MF_00503">
    <property type="entry name" value="Ribosomal_bL9"/>
    <property type="match status" value="1"/>
</dbReference>
<dbReference type="InterPro" id="IPR000244">
    <property type="entry name" value="Ribosomal_bL9"/>
</dbReference>
<dbReference type="InterPro" id="IPR009027">
    <property type="entry name" value="Ribosomal_bL9/RNase_H1_N"/>
</dbReference>
<dbReference type="InterPro" id="IPR020594">
    <property type="entry name" value="Ribosomal_bL9_bac/chp"/>
</dbReference>
<dbReference type="InterPro" id="IPR020069">
    <property type="entry name" value="Ribosomal_bL9_C"/>
</dbReference>
<dbReference type="InterPro" id="IPR036791">
    <property type="entry name" value="Ribosomal_bL9_C_sf"/>
</dbReference>
<dbReference type="InterPro" id="IPR020070">
    <property type="entry name" value="Ribosomal_bL9_N"/>
</dbReference>
<dbReference type="InterPro" id="IPR036935">
    <property type="entry name" value="Ribosomal_bL9_N_sf"/>
</dbReference>
<dbReference type="NCBIfam" id="TIGR00158">
    <property type="entry name" value="L9"/>
    <property type="match status" value="1"/>
</dbReference>
<dbReference type="PANTHER" id="PTHR21368">
    <property type="entry name" value="50S RIBOSOMAL PROTEIN L9"/>
    <property type="match status" value="1"/>
</dbReference>
<dbReference type="Pfam" id="PF03948">
    <property type="entry name" value="Ribosomal_L9_C"/>
    <property type="match status" value="1"/>
</dbReference>
<dbReference type="Pfam" id="PF01281">
    <property type="entry name" value="Ribosomal_L9_N"/>
    <property type="match status" value="1"/>
</dbReference>
<dbReference type="SUPFAM" id="SSF55658">
    <property type="entry name" value="L9 N-domain-like"/>
    <property type="match status" value="1"/>
</dbReference>
<dbReference type="SUPFAM" id="SSF55653">
    <property type="entry name" value="Ribosomal protein L9 C-domain"/>
    <property type="match status" value="1"/>
</dbReference>
<dbReference type="PROSITE" id="PS00651">
    <property type="entry name" value="RIBOSOMAL_L9"/>
    <property type="match status" value="1"/>
</dbReference>
<gene>
    <name evidence="1" type="primary">rplI</name>
    <name type="ordered locus">MXAN_5080</name>
</gene>
<proteinExistence type="inferred from homology"/>
<protein>
    <recommendedName>
        <fullName evidence="1">Large ribosomal subunit protein bL9</fullName>
    </recommendedName>
    <alternativeName>
        <fullName evidence="2">50S ribosomal protein L9</fullName>
    </alternativeName>
</protein>
<accession>Q1D289</accession>
<reference key="1">
    <citation type="journal article" date="2006" name="Proc. Natl. Acad. Sci. U.S.A.">
        <title>Evolution of sensory complexity recorded in a myxobacterial genome.</title>
        <authorList>
            <person name="Goldman B.S."/>
            <person name="Nierman W.C."/>
            <person name="Kaiser D."/>
            <person name="Slater S.C."/>
            <person name="Durkin A.S."/>
            <person name="Eisen J.A."/>
            <person name="Ronning C.M."/>
            <person name="Barbazuk W.B."/>
            <person name="Blanchard M."/>
            <person name="Field C."/>
            <person name="Halling C."/>
            <person name="Hinkle G."/>
            <person name="Iartchuk O."/>
            <person name="Kim H.S."/>
            <person name="Mackenzie C."/>
            <person name="Madupu R."/>
            <person name="Miller N."/>
            <person name="Shvartsbeyn A."/>
            <person name="Sullivan S.A."/>
            <person name="Vaudin M."/>
            <person name="Wiegand R."/>
            <person name="Kaplan H.B."/>
        </authorList>
    </citation>
    <scope>NUCLEOTIDE SEQUENCE [LARGE SCALE GENOMIC DNA]</scope>
    <source>
        <strain>DK1622</strain>
    </source>
</reference>
<organism>
    <name type="scientific">Myxococcus xanthus (strain DK1622)</name>
    <dbReference type="NCBI Taxonomy" id="246197"/>
    <lineage>
        <taxon>Bacteria</taxon>
        <taxon>Pseudomonadati</taxon>
        <taxon>Myxococcota</taxon>
        <taxon>Myxococcia</taxon>
        <taxon>Myxococcales</taxon>
        <taxon>Cystobacterineae</taxon>
        <taxon>Myxococcaceae</taxon>
        <taxon>Myxococcus</taxon>
    </lineage>
</organism>
<feature type="chain" id="PRO_0000258473" description="Large ribosomal subunit protein bL9">
    <location>
        <begin position="1"/>
        <end position="147"/>
    </location>
</feature>
<evidence type="ECO:0000255" key="1">
    <source>
        <dbReference type="HAMAP-Rule" id="MF_00503"/>
    </source>
</evidence>
<evidence type="ECO:0000305" key="2"/>
<sequence length="147" mass="16301">MKVILREDIENLGKSGELVTVKDGFGRNFLLPRKKAVLASEQNLRQLEHEKAVIAARNAKLKGAAEEQAKKIGAIKVSIKRRVGDQDKLFGSVTALDIAEAVAAEGQSIDRRHIHLPEPIKALGNYEVELRLHRDVIAKIKLEVLPE</sequence>
<comment type="function">
    <text evidence="1">Binds to the 23S rRNA.</text>
</comment>
<comment type="similarity">
    <text evidence="1">Belongs to the bacterial ribosomal protein bL9 family.</text>
</comment>
<keyword id="KW-1185">Reference proteome</keyword>
<keyword id="KW-0687">Ribonucleoprotein</keyword>
<keyword id="KW-0689">Ribosomal protein</keyword>
<keyword id="KW-0694">RNA-binding</keyword>
<keyword id="KW-0699">rRNA-binding</keyword>
<name>RL9_MYXXD</name>